<sequence length="601" mass="67015">MSGRFVRASKYRHIFGQTCKKELCYDNIKLSNNAWDSNLLSVNPFYLSVNWNAGAGGALAVIPLNERGKLPDQVNLFRGHTAAVLDTDWNPFHDQVLASGGDDSKIMIWKVPEDYTVMEPYEDVHPIAELKGHSRKVGLVQYHPTAANVLASSSADNTIKLWDCEKGVAHVSLKMDVMCQSMSFNADGTRLVTTSRDKKVRVWDPRTDKPVSVGNGHAGAKNPRVVWLGSLDRFATTGFSKMSDRQIALWDPTNLSEPIGGFTTLDTGSGILMPFWDDGTKVIYLAGKGDGNIRYYEYENDVFHYLSEFKSVDPQRGIAFLPKRGVNVSENEVMRAYKSVNDSIIEPISFIVPRRSESFQSDIYPPAPSGKPSLTAEEWASGKDAQPDLLDMSTLYESKGTVEKAVSATVPSAGAQVQKHNEEKVETPKPEAQPVSKPKESAEEQKPSKEPEVKPTTPSASKVEEPSKKRDEDNHQKEETVTQPKREKTPVEKSFPKPASSPVTFSEDVKKEPSEEKKLEVSDEAPKAAPLAESKKVEEKEPFYVSKDKKDISAVNLADLNKRFEGFEKRYEEELAIRDWKIAQLEDKLAKLTEAIKEKCN</sequence>
<organism>
    <name type="scientific">Schizosaccharomyces pombe (strain 972 / ATCC 24843)</name>
    <name type="common">Fission yeast</name>
    <dbReference type="NCBI Taxonomy" id="284812"/>
    <lineage>
        <taxon>Eukaryota</taxon>
        <taxon>Fungi</taxon>
        <taxon>Dikarya</taxon>
        <taxon>Ascomycota</taxon>
        <taxon>Taphrinomycotina</taxon>
        <taxon>Schizosaccharomycetes</taxon>
        <taxon>Schizosaccharomycetales</taxon>
        <taxon>Schizosaccharomycetaceae</taxon>
        <taxon>Schizosaccharomyces</taxon>
    </lineage>
</organism>
<gene>
    <name type="primary">crn1</name>
    <name type="ORF">SPAC23C4.02</name>
</gene>
<dbReference type="EMBL" id="CU329670">
    <property type="protein sequence ID" value="CAB16873.1"/>
    <property type="molecule type" value="Genomic_DNA"/>
</dbReference>
<dbReference type="PIR" id="T38258">
    <property type="entry name" value="T38258"/>
</dbReference>
<dbReference type="RefSeq" id="NP_593175.1">
    <property type="nucleotide sequence ID" value="NM_001018571.2"/>
</dbReference>
<dbReference type="SMR" id="O13923"/>
<dbReference type="BioGRID" id="278448">
    <property type="interactions" value="20"/>
</dbReference>
<dbReference type="FunCoup" id="O13923">
    <property type="interactions" value="109"/>
</dbReference>
<dbReference type="STRING" id="284812.O13923"/>
<dbReference type="iPTMnet" id="O13923"/>
<dbReference type="PaxDb" id="4896-SPAC23C4.02.1"/>
<dbReference type="EnsemblFungi" id="SPAC23C4.02.1">
    <property type="protein sequence ID" value="SPAC23C4.02.1:pep"/>
    <property type="gene ID" value="SPAC23C4.02"/>
</dbReference>
<dbReference type="GeneID" id="2541961"/>
<dbReference type="KEGG" id="spo:2541961"/>
<dbReference type="PomBase" id="SPAC23C4.02">
    <property type="gene designation" value="crn1"/>
</dbReference>
<dbReference type="VEuPathDB" id="FungiDB:SPAC23C4.02"/>
<dbReference type="eggNOG" id="KOG0303">
    <property type="taxonomic scope" value="Eukaryota"/>
</dbReference>
<dbReference type="HOGENOM" id="CLU_026859_3_1_1"/>
<dbReference type="InParanoid" id="O13923"/>
<dbReference type="OMA" id="NFQDDIY"/>
<dbReference type="PhylomeDB" id="O13923"/>
<dbReference type="PRO" id="PR:O13923"/>
<dbReference type="Proteomes" id="UP000002485">
    <property type="component" value="Chromosome I"/>
</dbReference>
<dbReference type="GO" id="GO:0030479">
    <property type="term" value="C:actin cortical patch"/>
    <property type="evidence" value="ECO:0000314"/>
    <property type="project" value="PomBase"/>
</dbReference>
<dbReference type="GO" id="GO:0051286">
    <property type="term" value="C:cell tip"/>
    <property type="evidence" value="ECO:0000314"/>
    <property type="project" value="PomBase"/>
</dbReference>
<dbReference type="GO" id="GO:0030139">
    <property type="term" value="C:endocytic vesicle"/>
    <property type="evidence" value="ECO:0000314"/>
    <property type="project" value="PomBase"/>
</dbReference>
<dbReference type="GO" id="GO:1990819">
    <property type="term" value="C:mating projection actin fusion focus"/>
    <property type="evidence" value="ECO:0000314"/>
    <property type="project" value="PomBase"/>
</dbReference>
<dbReference type="GO" id="GO:0110085">
    <property type="term" value="C:mitotic actomyosin contractile ring"/>
    <property type="evidence" value="ECO:0000314"/>
    <property type="project" value="PomBase"/>
</dbReference>
<dbReference type="GO" id="GO:0051015">
    <property type="term" value="F:actin filament binding"/>
    <property type="evidence" value="ECO:0000318"/>
    <property type="project" value="GO_Central"/>
</dbReference>
<dbReference type="GO" id="GO:0051017">
    <property type="term" value="P:actin filament bundle assembly"/>
    <property type="evidence" value="ECO:0000303"/>
    <property type="project" value="PomBase"/>
</dbReference>
<dbReference type="GO" id="GO:0007015">
    <property type="term" value="P:actin filament organization"/>
    <property type="evidence" value="ECO:0000318"/>
    <property type="project" value="GO_Central"/>
</dbReference>
<dbReference type="GO" id="GO:0030041">
    <property type="term" value="P:actin filament polymerization"/>
    <property type="evidence" value="ECO:0000303"/>
    <property type="project" value="PomBase"/>
</dbReference>
<dbReference type="FunFam" id="2.130.10.10:FF:000197">
    <property type="entry name" value="Coronin"/>
    <property type="match status" value="1"/>
</dbReference>
<dbReference type="Gene3D" id="2.130.10.10">
    <property type="entry name" value="YVTN repeat-like/Quinoprotein amine dehydrogenase"/>
    <property type="match status" value="1"/>
</dbReference>
<dbReference type="InterPro" id="IPR015505">
    <property type="entry name" value="Coronin"/>
</dbReference>
<dbReference type="InterPro" id="IPR015048">
    <property type="entry name" value="DUF1899"/>
</dbReference>
<dbReference type="InterPro" id="IPR020472">
    <property type="entry name" value="G-protein_beta_WD-40_rep"/>
</dbReference>
<dbReference type="InterPro" id="IPR015943">
    <property type="entry name" value="WD40/YVTN_repeat-like_dom_sf"/>
</dbReference>
<dbReference type="InterPro" id="IPR036322">
    <property type="entry name" value="WD40_repeat_dom_sf"/>
</dbReference>
<dbReference type="InterPro" id="IPR001680">
    <property type="entry name" value="WD40_rpt"/>
</dbReference>
<dbReference type="PANTHER" id="PTHR10856">
    <property type="entry name" value="CORONIN"/>
    <property type="match status" value="1"/>
</dbReference>
<dbReference type="PANTHER" id="PTHR10856:SF0">
    <property type="entry name" value="CORONIN"/>
    <property type="match status" value="1"/>
</dbReference>
<dbReference type="Pfam" id="PF08953">
    <property type="entry name" value="DUF1899"/>
    <property type="match status" value="1"/>
</dbReference>
<dbReference type="Pfam" id="PF00400">
    <property type="entry name" value="WD40"/>
    <property type="match status" value="3"/>
</dbReference>
<dbReference type="Pfam" id="PF16300">
    <property type="entry name" value="WD40_4"/>
    <property type="match status" value="1"/>
</dbReference>
<dbReference type="PRINTS" id="PR00320">
    <property type="entry name" value="GPROTEINBRPT"/>
</dbReference>
<dbReference type="SMART" id="SM01166">
    <property type="entry name" value="DUF1899"/>
    <property type="match status" value="1"/>
</dbReference>
<dbReference type="SMART" id="SM01167">
    <property type="entry name" value="DUF1900"/>
    <property type="match status" value="1"/>
</dbReference>
<dbReference type="SMART" id="SM00320">
    <property type="entry name" value="WD40"/>
    <property type="match status" value="4"/>
</dbReference>
<dbReference type="SUPFAM" id="SSF50978">
    <property type="entry name" value="WD40 repeat-like"/>
    <property type="match status" value="1"/>
</dbReference>
<dbReference type="PROSITE" id="PS00678">
    <property type="entry name" value="WD_REPEATS_1"/>
    <property type="match status" value="1"/>
</dbReference>
<dbReference type="PROSITE" id="PS50082">
    <property type="entry name" value="WD_REPEATS_2"/>
    <property type="match status" value="3"/>
</dbReference>
<dbReference type="PROSITE" id="PS50294">
    <property type="entry name" value="WD_REPEATS_REGION"/>
    <property type="match status" value="1"/>
</dbReference>
<name>CORO_SCHPO</name>
<protein>
    <recommendedName>
        <fullName>Coronin-like protein crn1</fullName>
    </recommendedName>
</protein>
<feature type="chain" id="PRO_0000050939" description="Coronin-like protein crn1">
    <location>
        <begin position="1"/>
        <end position="601"/>
    </location>
</feature>
<feature type="repeat" description="WD 1">
    <location>
        <begin position="79"/>
        <end position="119"/>
    </location>
</feature>
<feature type="repeat" description="WD 2">
    <location>
        <begin position="132"/>
        <end position="172"/>
    </location>
</feature>
<feature type="repeat" description="WD 3">
    <location>
        <begin position="174"/>
        <end position="213"/>
    </location>
</feature>
<feature type="repeat" description="WD 4">
    <location>
        <begin position="220"/>
        <end position="260"/>
    </location>
</feature>
<feature type="repeat" description="WD 5">
    <location>
        <begin position="266"/>
        <end position="306"/>
    </location>
</feature>
<feature type="region of interest" description="Disordered" evidence="3">
    <location>
        <begin position="361"/>
        <end position="386"/>
    </location>
</feature>
<feature type="region of interest" description="Disordered" evidence="3">
    <location>
        <begin position="407"/>
        <end position="540"/>
    </location>
</feature>
<feature type="coiled-coil region" evidence="2">
    <location>
        <begin position="556"/>
        <end position="600"/>
    </location>
</feature>
<feature type="compositionally biased region" description="Basic and acidic residues" evidence="3">
    <location>
        <begin position="419"/>
        <end position="429"/>
    </location>
</feature>
<feature type="compositionally biased region" description="Basic and acidic residues" evidence="3">
    <location>
        <begin position="437"/>
        <end position="453"/>
    </location>
</feature>
<feature type="compositionally biased region" description="Basic and acidic residues" evidence="3">
    <location>
        <begin position="462"/>
        <end position="495"/>
    </location>
</feature>
<feature type="compositionally biased region" description="Basic and acidic residues" evidence="3">
    <location>
        <begin position="507"/>
        <end position="526"/>
    </location>
</feature>
<feature type="modified residue" description="Phosphoserine" evidence="4">
    <location>
        <position position="500"/>
    </location>
</feature>
<feature type="modified residue" description="Phosphoserine" evidence="4">
    <location>
        <position position="501"/>
    </location>
</feature>
<feature type="modified residue" description="Phosphoserine" evidence="4">
    <location>
        <position position="553"/>
    </location>
</feature>
<accession>O13923</accession>
<keyword id="KW-0009">Actin-binding</keyword>
<keyword id="KW-0175">Coiled coil</keyword>
<keyword id="KW-0597">Phosphoprotein</keyword>
<keyword id="KW-1185">Reference proteome</keyword>
<keyword id="KW-0677">Repeat</keyword>
<keyword id="KW-0853">WD repeat</keyword>
<evidence type="ECO:0000250" key="1"/>
<evidence type="ECO:0000255" key="2"/>
<evidence type="ECO:0000256" key="3">
    <source>
        <dbReference type="SAM" id="MobiDB-lite"/>
    </source>
</evidence>
<evidence type="ECO:0000269" key="4">
    <source>
    </source>
</evidence>
<evidence type="ECO:0000305" key="5"/>
<proteinExistence type="evidence at protein level"/>
<reference key="1">
    <citation type="journal article" date="2002" name="Nature">
        <title>The genome sequence of Schizosaccharomyces pombe.</title>
        <authorList>
            <person name="Wood V."/>
            <person name="Gwilliam R."/>
            <person name="Rajandream M.A."/>
            <person name="Lyne M.H."/>
            <person name="Lyne R."/>
            <person name="Stewart A."/>
            <person name="Sgouros J.G."/>
            <person name="Peat N."/>
            <person name="Hayles J."/>
            <person name="Baker S.G."/>
            <person name="Basham D."/>
            <person name="Bowman S."/>
            <person name="Brooks K."/>
            <person name="Brown D."/>
            <person name="Brown S."/>
            <person name="Chillingworth T."/>
            <person name="Churcher C.M."/>
            <person name="Collins M."/>
            <person name="Connor R."/>
            <person name="Cronin A."/>
            <person name="Davis P."/>
            <person name="Feltwell T."/>
            <person name="Fraser A."/>
            <person name="Gentles S."/>
            <person name="Goble A."/>
            <person name="Hamlin N."/>
            <person name="Harris D.E."/>
            <person name="Hidalgo J."/>
            <person name="Hodgson G."/>
            <person name="Holroyd S."/>
            <person name="Hornsby T."/>
            <person name="Howarth S."/>
            <person name="Huckle E.J."/>
            <person name="Hunt S."/>
            <person name="Jagels K."/>
            <person name="James K.D."/>
            <person name="Jones L."/>
            <person name="Jones M."/>
            <person name="Leather S."/>
            <person name="McDonald S."/>
            <person name="McLean J."/>
            <person name="Mooney P."/>
            <person name="Moule S."/>
            <person name="Mungall K.L."/>
            <person name="Murphy L.D."/>
            <person name="Niblett D."/>
            <person name="Odell C."/>
            <person name="Oliver K."/>
            <person name="O'Neil S."/>
            <person name="Pearson D."/>
            <person name="Quail M.A."/>
            <person name="Rabbinowitsch E."/>
            <person name="Rutherford K.M."/>
            <person name="Rutter S."/>
            <person name="Saunders D."/>
            <person name="Seeger K."/>
            <person name="Sharp S."/>
            <person name="Skelton J."/>
            <person name="Simmonds M.N."/>
            <person name="Squares R."/>
            <person name="Squares S."/>
            <person name="Stevens K."/>
            <person name="Taylor K."/>
            <person name="Taylor R.G."/>
            <person name="Tivey A."/>
            <person name="Walsh S.V."/>
            <person name="Warren T."/>
            <person name="Whitehead S."/>
            <person name="Woodward J.R."/>
            <person name="Volckaert G."/>
            <person name="Aert R."/>
            <person name="Robben J."/>
            <person name="Grymonprez B."/>
            <person name="Weltjens I."/>
            <person name="Vanstreels E."/>
            <person name="Rieger M."/>
            <person name="Schaefer M."/>
            <person name="Mueller-Auer S."/>
            <person name="Gabel C."/>
            <person name="Fuchs M."/>
            <person name="Duesterhoeft A."/>
            <person name="Fritzc C."/>
            <person name="Holzer E."/>
            <person name="Moestl D."/>
            <person name="Hilbert H."/>
            <person name="Borzym K."/>
            <person name="Langer I."/>
            <person name="Beck A."/>
            <person name="Lehrach H."/>
            <person name="Reinhardt R."/>
            <person name="Pohl T.M."/>
            <person name="Eger P."/>
            <person name="Zimmermann W."/>
            <person name="Wedler H."/>
            <person name="Wambutt R."/>
            <person name="Purnelle B."/>
            <person name="Goffeau A."/>
            <person name="Cadieu E."/>
            <person name="Dreano S."/>
            <person name="Gloux S."/>
            <person name="Lelaure V."/>
            <person name="Mottier S."/>
            <person name="Galibert F."/>
            <person name="Aves S.J."/>
            <person name="Xiang Z."/>
            <person name="Hunt C."/>
            <person name="Moore K."/>
            <person name="Hurst S.M."/>
            <person name="Lucas M."/>
            <person name="Rochet M."/>
            <person name="Gaillardin C."/>
            <person name="Tallada V.A."/>
            <person name="Garzon A."/>
            <person name="Thode G."/>
            <person name="Daga R.R."/>
            <person name="Cruzado L."/>
            <person name="Jimenez J."/>
            <person name="Sanchez M."/>
            <person name="del Rey F."/>
            <person name="Benito J."/>
            <person name="Dominguez A."/>
            <person name="Revuelta J.L."/>
            <person name="Moreno S."/>
            <person name="Armstrong J."/>
            <person name="Forsburg S.L."/>
            <person name="Cerutti L."/>
            <person name="Lowe T."/>
            <person name="McCombie W.R."/>
            <person name="Paulsen I."/>
            <person name="Potashkin J."/>
            <person name="Shpakovski G.V."/>
            <person name="Ussery D."/>
            <person name="Barrell B.G."/>
            <person name="Nurse P."/>
        </authorList>
    </citation>
    <scope>NUCLEOTIDE SEQUENCE [LARGE SCALE GENOMIC DNA]</scope>
    <source>
        <strain>972 / ATCC 24843</strain>
    </source>
</reference>
<reference key="2">
    <citation type="journal article" date="2008" name="J. Proteome Res.">
        <title>Phosphoproteome analysis of fission yeast.</title>
        <authorList>
            <person name="Wilson-Grady J.T."/>
            <person name="Villen J."/>
            <person name="Gygi S.P."/>
        </authorList>
    </citation>
    <scope>PHOSPHORYLATION [LARGE SCALE ANALYSIS] AT SER-500; SER-501 AND SER-553</scope>
    <scope>IDENTIFICATION BY MASS SPECTROMETRY</scope>
</reference>
<comment type="subunit">
    <text evidence="1">Binds to F-actin.</text>
</comment>
<comment type="similarity">
    <text evidence="5">Belongs to the WD repeat coronin family.</text>
</comment>